<organism>
    <name type="scientific">Thermosipho melanesiensis (strain DSM 12029 / CIP 104789 / BI429)</name>
    <dbReference type="NCBI Taxonomy" id="391009"/>
    <lineage>
        <taxon>Bacteria</taxon>
        <taxon>Thermotogati</taxon>
        <taxon>Thermotogota</taxon>
        <taxon>Thermotogae</taxon>
        <taxon>Thermotogales</taxon>
        <taxon>Fervidobacteriaceae</taxon>
        <taxon>Thermosipho</taxon>
    </lineage>
</organism>
<evidence type="ECO:0000255" key="1">
    <source>
        <dbReference type="HAMAP-Rule" id="MF_00041"/>
    </source>
</evidence>
<feature type="chain" id="PRO_0000332911" description="Cysteine--tRNA ligase">
    <location>
        <begin position="1"/>
        <end position="469"/>
    </location>
</feature>
<feature type="short sequence motif" description="'HIGH' region">
    <location>
        <begin position="31"/>
        <end position="41"/>
    </location>
</feature>
<feature type="short sequence motif" description="'KMSKS' region">
    <location>
        <begin position="267"/>
        <end position="271"/>
    </location>
</feature>
<feature type="binding site" evidence="1">
    <location>
        <position position="29"/>
    </location>
    <ligand>
        <name>Zn(2+)</name>
        <dbReference type="ChEBI" id="CHEBI:29105"/>
    </ligand>
</feature>
<feature type="binding site" evidence="1">
    <location>
        <position position="210"/>
    </location>
    <ligand>
        <name>Zn(2+)</name>
        <dbReference type="ChEBI" id="CHEBI:29105"/>
    </ligand>
</feature>
<feature type="binding site" evidence="1">
    <location>
        <position position="235"/>
    </location>
    <ligand>
        <name>Zn(2+)</name>
        <dbReference type="ChEBI" id="CHEBI:29105"/>
    </ligand>
</feature>
<feature type="binding site" evidence="1">
    <location>
        <position position="239"/>
    </location>
    <ligand>
        <name>Zn(2+)</name>
        <dbReference type="ChEBI" id="CHEBI:29105"/>
    </ligand>
</feature>
<feature type="binding site" evidence="1">
    <location>
        <position position="270"/>
    </location>
    <ligand>
        <name>ATP</name>
        <dbReference type="ChEBI" id="CHEBI:30616"/>
    </ligand>
</feature>
<accession>A6LJ41</accession>
<proteinExistence type="inferred from homology"/>
<keyword id="KW-0030">Aminoacyl-tRNA synthetase</keyword>
<keyword id="KW-0067">ATP-binding</keyword>
<keyword id="KW-0963">Cytoplasm</keyword>
<keyword id="KW-0436">Ligase</keyword>
<keyword id="KW-0479">Metal-binding</keyword>
<keyword id="KW-0547">Nucleotide-binding</keyword>
<keyword id="KW-0648">Protein biosynthesis</keyword>
<keyword id="KW-0862">Zinc</keyword>
<gene>
    <name evidence="1" type="primary">cysS</name>
    <name type="ordered locus">Tmel_0064</name>
</gene>
<dbReference type="EC" id="6.1.1.16" evidence="1"/>
<dbReference type="EMBL" id="CP000716">
    <property type="protein sequence ID" value="ABR29942.1"/>
    <property type="molecule type" value="Genomic_DNA"/>
</dbReference>
<dbReference type="RefSeq" id="WP_012056304.1">
    <property type="nucleotide sequence ID" value="NC_009616.1"/>
</dbReference>
<dbReference type="SMR" id="A6LJ41"/>
<dbReference type="STRING" id="391009.Tmel_0064"/>
<dbReference type="KEGG" id="tme:Tmel_0064"/>
<dbReference type="eggNOG" id="COG0215">
    <property type="taxonomic scope" value="Bacteria"/>
</dbReference>
<dbReference type="HOGENOM" id="CLU_013528_0_1_0"/>
<dbReference type="OrthoDB" id="9815130at2"/>
<dbReference type="Proteomes" id="UP000001110">
    <property type="component" value="Chromosome"/>
</dbReference>
<dbReference type="GO" id="GO:0005829">
    <property type="term" value="C:cytosol"/>
    <property type="evidence" value="ECO:0007669"/>
    <property type="project" value="TreeGrafter"/>
</dbReference>
<dbReference type="GO" id="GO:0005524">
    <property type="term" value="F:ATP binding"/>
    <property type="evidence" value="ECO:0007669"/>
    <property type="project" value="UniProtKB-UniRule"/>
</dbReference>
<dbReference type="GO" id="GO:0004817">
    <property type="term" value="F:cysteine-tRNA ligase activity"/>
    <property type="evidence" value="ECO:0007669"/>
    <property type="project" value="UniProtKB-UniRule"/>
</dbReference>
<dbReference type="GO" id="GO:0008270">
    <property type="term" value="F:zinc ion binding"/>
    <property type="evidence" value="ECO:0007669"/>
    <property type="project" value="UniProtKB-UniRule"/>
</dbReference>
<dbReference type="GO" id="GO:0006423">
    <property type="term" value="P:cysteinyl-tRNA aminoacylation"/>
    <property type="evidence" value="ECO:0007669"/>
    <property type="project" value="UniProtKB-UniRule"/>
</dbReference>
<dbReference type="CDD" id="cd00672">
    <property type="entry name" value="CysRS_core"/>
    <property type="match status" value="1"/>
</dbReference>
<dbReference type="FunFam" id="3.40.50.620:FF:000009">
    <property type="entry name" value="Cysteine--tRNA ligase"/>
    <property type="match status" value="1"/>
</dbReference>
<dbReference type="Gene3D" id="1.20.120.1910">
    <property type="entry name" value="Cysteine-tRNA ligase, C-terminal anti-codon recognition domain"/>
    <property type="match status" value="1"/>
</dbReference>
<dbReference type="Gene3D" id="3.40.50.620">
    <property type="entry name" value="HUPs"/>
    <property type="match status" value="1"/>
</dbReference>
<dbReference type="HAMAP" id="MF_00041">
    <property type="entry name" value="Cys_tRNA_synth"/>
    <property type="match status" value="1"/>
</dbReference>
<dbReference type="InterPro" id="IPR015803">
    <property type="entry name" value="Cys-tRNA-ligase"/>
</dbReference>
<dbReference type="InterPro" id="IPR015273">
    <property type="entry name" value="Cys-tRNA-synt_Ia_DALR"/>
</dbReference>
<dbReference type="InterPro" id="IPR024909">
    <property type="entry name" value="Cys-tRNA/MSH_ligase"/>
</dbReference>
<dbReference type="InterPro" id="IPR014729">
    <property type="entry name" value="Rossmann-like_a/b/a_fold"/>
</dbReference>
<dbReference type="InterPro" id="IPR032678">
    <property type="entry name" value="tRNA-synt_1_cat_dom"/>
</dbReference>
<dbReference type="InterPro" id="IPR009080">
    <property type="entry name" value="tRNAsynth_Ia_anticodon-bd"/>
</dbReference>
<dbReference type="NCBIfam" id="TIGR00435">
    <property type="entry name" value="cysS"/>
    <property type="match status" value="1"/>
</dbReference>
<dbReference type="PANTHER" id="PTHR10890:SF3">
    <property type="entry name" value="CYSTEINE--TRNA LIGASE, CYTOPLASMIC"/>
    <property type="match status" value="1"/>
</dbReference>
<dbReference type="PANTHER" id="PTHR10890">
    <property type="entry name" value="CYSTEINYL-TRNA SYNTHETASE"/>
    <property type="match status" value="1"/>
</dbReference>
<dbReference type="Pfam" id="PF09190">
    <property type="entry name" value="DALR_2"/>
    <property type="match status" value="1"/>
</dbReference>
<dbReference type="Pfam" id="PF01406">
    <property type="entry name" value="tRNA-synt_1e"/>
    <property type="match status" value="1"/>
</dbReference>
<dbReference type="PRINTS" id="PR00983">
    <property type="entry name" value="TRNASYNTHCYS"/>
</dbReference>
<dbReference type="SMART" id="SM00840">
    <property type="entry name" value="DALR_2"/>
    <property type="match status" value="1"/>
</dbReference>
<dbReference type="SUPFAM" id="SSF47323">
    <property type="entry name" value="Anticodon-binding domain of a subclass of class I aminoacyl-tRNA synthetases"/>
    <property type="match status" value="1"/>
</dbReference>
<dbReference type="SUPFAM" id="SSF52374">
    <property type="entry name" value="Nucleotidylyl transferase"/>
    <property type="match status" value="1"/>
</dbReference>
<sequence length="469" mass="53827">MAIYITNTESGKKEKLVPNTPGVVKMYVCGPTVYNYIHIGNARPAVVFDAFRRFLEYRGYKVVMVQNFTDIDDKIINEANAWGVNFKDVADTFIAEYWKDAENLGIRAANFHPRTTDYVKEIVEAVEKLIAKNYAYVADNGDVYFSVKEFKDYGKLSGKKLEDLVAGARVEVSELKKNPLDFALWKAVKPGEPSWDSPWGNGRPGWHIECSVMSQRLLGDSFDIHAGGEDLIFPHHEDEKAQSEALTGKPFAKYWMHNGMIITRGDKMSKSIGNVFLVREAVKRYGKDAVKLFLLSKHYRTPIEFSHEIMFNTKKAALRILNTLNRFEEKYPYPLVPKRDTFMNDMEARFVEALEDDFNTPRVIALIFELSKDLNKAMDEGKEEEALKRYHLITRVFGSVLGIFERGLKVVETNNQKIIEEILSVRQELRKEKDYNVADKIRDALLRAGVKILDTSEGTKWEMNTEVDE</sequence>
<reference key="1">
    <citation type="submission" date="2007-05" db="EMBL/GenBank/DDBJ databases">
        <title>Complete sequence of Thermosipho melanesiensis BI429.</title>
        <authorList>
            <consortium name="US DOE Joint Genome Institute"/>
            <person name="Copeland A."/>
            <person name="Lucas S."/>
            <person name="Lapidus A."/>
            <person name="Barry K."/>
            <person name="Glavina del Rio T."/>
            <person name="Dalin E."/>
            <person name="Tice H."/>
            <person name="Pitluck S."/>
            <person name="Chertkov O."/>
            <person name="Brettin T."/>
            <person name="Bruce D."/>
            <person name="Detter J.C."/>
            <person name="Han C."/>
            <person name="Schmutz J."/>
            <person name="Larimer F."/>
            <person name="Land M."/>
            <person name="Hauser L."/>
            <person name="Kyrpides N."/>
            <person name="Mikhailova N."/>
            <person name="Nelson K."/>
            <person name="Gogarten J.P."/>
            <person name="Noll K."/>
            <person name="Richardson P."/>
        </authorList>
    </citation>
    <scope>NUCLEOTIDE SEQUENCE [LARGE SCALE GENOMIC DNA]</scope>
    <source>
        <strain>DSM 12029 / CIP 104789 / BI429</strain>
    </source>
</reference>
<comment type="catalytic activity">
    <reaction evidence="1">
        <text>tRNA(Cys) + L-cysteine + ATP = L-cysteinyl-tRNA(Cys) + AMP + diphosphate</text>
        <dbReference type="Rhea" id="RHEA:17773"/>
        <dbReference type="Rhea" id="RHEA-COMP:9661"/>
        <dbReference type="Rhea" id="RHEA-COMP:9679"/>
        <dbReference type="ChEBI" id="CHEBI:30616"/>
        <dbReference type="ChEBI" id="CHEBI:33019"/>
        <dbReference type="ChEBI" id="CHEBI:35235"/>
        <dbReference type="ChEBI" id="CHEBI:78442"/>
        <dbReference type="ChEBI" id="CHEBI:78517"/>
        <dbReference type="ChEBI" id="CHEBI:456215"/>
        <dbReference type="EC" id="6.1.1.16"/>
    </reaction>
</comment>
<comment type="cofactor">
    <cofactor evidence="1">
        <name>Zn(2+)</name>
        <dbReference type="ChEBI" id="CHEBI:29105"/>
    </cofactor>
    <text evidence="1">Binds 1 zinc ion per subunit.</text>
</comment>
<comment type="subunit">
    <text evidence="1">Monomer.</text>
</comment>
<comment type="subcellular location">
    <subcellularLocation>
        <location evidence="1">Cytoplasm</location>
    </subcellularLocation>
</comment>
<comment type="similarity">
    <text evidence="1">Belongs to the class-I aminoacyl-tRNA synthetase family.</text>
</comment>
<protein>
    <recommendedName>
        <fullName evidence="1">Cysteine--tRNA ligase</fullName>
        <ecNumber evidence="1">6.1.1.16</ecNumber>
    </recommendedName>
    <alternativeName>
        <fullName evidence="1">Cysteinyl-tRNA synthetase</fullName>
        <shortName evidence="1">CysRS</shortName>
    </alternativeName>
</protein>
<name>SYC_THEM4</name>